<dbReference type="EC" id="4.2.1.10" evidence="1"/>
<dbReference type="EMBL" id="AY596297">
    <property type="protein sequence ID" value="AAV46758.1"/>
    <property type="molecule type" value="Genomic_DNA"/>
</dbReference>
<dbReference type="RefSeq" id="WP_011223902.1">
    <property type="nucleotide sequence ID" value="NC_006396.1"/>
</dbReference>
<dbReference type="SMR" id="Q5V145"/>
<dbReference type="STRING" id="272569.rrnAC1877"/>
<dbReference type="PaxDb" id="272569-rrnAC1877"/>
<dbReference type="EnsemblBacteria" id="AAV46758">
    <property type="protein sequence ID" value="AAV46758"/>
    <property type="gene ID" value="rrnAC1877"/>
</dbReference>
<dbReference type="GeneID" id="40152813"/>
<dbReference type="KEGG" id="hma:rrnAC1877"/>
<dbReference type="PATRIC" id="fig|272569.17.peg.2542"/>
<dbReference type="eggNOG" id="arCOG02097">
    <property type="taxonomic scope" value="Archaea"/>
</dbReference>
<dbReference type="HOGENOM" id="CLU_064444_1_0_2"/>
<dbReference type="UniPathway" id="UPA00053">
    <property type="reaction ID" value="UER00086"/>
</dbReference>
<dbReference type="Proteomes" id="UP000001169">
    <property type="component" value="Chromosome I"/>
</dbReference>
<dbReference type="GO" id="GO:0003855">
    <property type="term" value="F:3-dehydroquinate dehydratase activity"/>
    <property type="evidence" value="ECO:0007669"/>
    <property type="project" value="UniProtKB-UniRule"/>
</dbReference>
<dbReference type="GO" id="GO:0046279">
    <property type="term" value="P:3,4-dihydroxybenzoate biosynthetic process"/>
    <property type="evidence" value="ECO:0007669"/>
    <property type="project" value="TreeGrafter"/>
</dbReference>
<dbReference type="GO" id="GO:0008652">
    <property type="term" value="P:amino acid biosynthetic process"/>
    <property type="evidence" value="ECO:0007669"/>
    <property type="project" value="UniProtKB-KW"/>
</dbReference>
<dbReference type="GO" id="GO:0009073">
    <property type="term" value="P:aromatic amino acid family biosynthetic process"/>
    <property type="evidence" value="ECO:0007669"/>
    <property type="project" value="UniProtKB-KW"/>
</dbReference>
<dbReference type="GO" id="GO:0009423">
    <property type="term" value="P:chorismate biosynthetic process"/>
    <property type="evidence" value="ECO:0007669"/>
    <property type="project" value="UniProtKB-UniRule"/>
</dbReference>
<dbReference type="CDD" id="cd00502">
    <property type="entry name" value="DHQase_I"/>
    <property type="match status" value="1"/>
</dbReference>
<dbReference type="Gene3D" id="3.20.20.70">
    <property type="entry name" value="Aldolase class I"/>
    <property type="match status" value="1"/>
</dbReference>
<dbReference type="HAMAP" id="MF_00214">
    <property type="entry name" value="AroD"/>
    <property type="match status" value="1"/>
</dbReference>
<dbReference type="InterPro" id="IPR013785">
    <property type="entry name" value="Aldolase_TIM"/>
</dbReference>
<dbReference type="InterPro" id="IPR001381">
    <property type="entry name" value="DHquinase_I"/>
</dbReference>
<dbReference type="InterPro" id="IPR050146">
    <property type="entry name" value="Type-I_3-dehydroquinase"/>
</dbReference>
<dbReference type="PANTHER" id="PTHR43699">
    <property type="entry name" value="3-DEHYDROQUINATE DEHYDRATASE"/>
    <property type="match status" value="1"/>
</dbReference>
<dbReference type="PANTHER" id="PTHR43699:SF1">
    <property type="entry name" value="3-DEHYDROQUINATE DEHYDRATASE"/>
    <property type="match status" value="1"/>
</dbReference>
<dbReference type="Pfam" id="PF01487">
    <property type="entry name" value="DHquinase_I"/>
    <property type="match status" value="1"/>
</dbReference>
<dbReference type="SUPFAM" id="SSF51569">
    <property type="entry name" value="Aldolase"/>
    <property type="match status" value="1"/>
</dbReference>
<organism>
    <name type="scientific">Haloarcula marismortui (strain ATCC 43049 / DSM 3752 / JCM 8966 / VKM B-1809)</name>
    <name type="common">Halobacterium marismortui</name>
    <dbReference type="NCBI Taxonomy" id="272569"/>
    <lineage>
        <taxon>Archaea</taxon>
        <taxon>Methanobacteriati</taxon>
        <taxon>Methanobacteriota</taxon>
        <taxon>Stenosarchaea group</taxon>
        <taxon>Halobacteria</taxon>
        <taxon>Halobacteriales</taxon>
        <taxon>Haloarculaceae</taxon>
        <taxon>Haloarcula</taxon>
    </lineage>
</organism>
<accession>Q5V145</accession>
<proteinExistence type="inferred from homology"/>
<gene>
    <name evidence="1" type="primary">aroD</name>
    <name type="ordered locus">rrnAC1877</name>
</gene>
<comment type="function">
    <text evidence="1">Involved in the third step of the chorismate pathway, which leads to the biosynthesis of aromatic amino acids. Catalyzes the cis-dehydration of 3-dehydroquinate (DHQ) and introduces the first double bond of the aromatic ring to yield 3-dehydroshikimate.</text>
</comment>
<comment type="catalytic activity">
    <reaction evidence="1">
        <text>3-dehydroquinate = 3-dehydroshikimate + H2O</text>
        <dbReference type="Rhea" id="RHEA:21096"/>
        <dbReference type="ChEBI" id="CHEBI:15377"/>
        <dbReference type="ChEBI" id="CHEBI:16630"/>
        <dbReference type="ChEBI" id="CHEBI:32364"/>
        <dbReference type="EC" id="4.2.1.10"/>
    </reaction>
</comment>
<comment type="pathway">
    <text evidence="1">Metabolic intermediate biosynthesis; chorismate biosynthesis; chorismate from D-erythrose 4-phosphate and phosphoenolpyruvate: step 3/7.</text>
</comment>
<comment type="subunit">
    <text evidence="1">Homodimer.</text>
</comment>
<comment type="similarity">
    <text evidence="1">Belongs to the type-I 3-dehydroquinase family.</text>
</comment>
<evidence type="ECO:0000255" key="1">
    <source>
        <dbReference type="HAMAP-Rule" id="MF_00214"/>
    </source>
</evidence>
<protein>
    <recommendedName>
        <fullName evidence="1">3-dehydroquinate dehydratase</fullName>
        <shortName evidence="1">3-dehydroquinase</shortName>
        <ecNumber evidence="1">4.2.1.10</ecNumber>
    </recommendedName>
    <alternativeName>
        <fullName evidence="1">Type I DHQase</fullName>
    </alternativeName>
    <alternativeName>
        <fullName evidence="1">Type I dehydroquinase</fullName>
        <shortName evidence="1">DHQ1</shortName>
    </alternativeName>
</protein>
<reference key="1">
    <citation type="journal article" date="2004" name="Genome Res.">
        <title>Genome sequence of Haloarcula marismortui: a halophilic archaeon from the Dead Sea.</title>
        <authorList>
            <person name="Baliga N.S."/>
            <person name="Bonneau R."/>
            <person name="Facciotti M.T."/>
            <person name="Pan M."/>
            <person name="Glusman G."/>
            <person name="Deutsch E.W."/>
            <person name="Shannon P."/>
            <person name="Chiu Y."/>
            <person name="Weng R.S."/>
            <person name="Gan R.R."/>
            <person name="Hung P."/>
            <person name="Date S.V."/>
            <person name="Marcotte E."/>
            <person name="Hood L."/>
            <person name="Ng W.V."/>
        </authorList>
    </citation>
    <scope>NUCLEOTIDE SEQUENCE [LARGE SCALE GENOMIC DNA]</scope>
    <source>
        <strain>ATCC 43049 / DSM 3752 / JCM 8966 / VKM B-1809</strain>
    </source>
</reference>
<feature type="chain" id="PRO_1000043166" description="3-dehydroquinate dehydratase">
    <location>
        <begin position="1"/>
        <end position="229"/>
    </location>
</feature>
<feature type="active site" description="Proton donor/acceptor" evidence="1">
    <location>
        <position position="120"/>
    </location>
</feature>
<feature type="active site" description="Schiff-base intermediate with substrate" evidence="1">
    <location>
        <position position="146"/>
    </location>
</feature>
<feature type="binding site" evidence="1">
    <location>
        <begin position="29"/>
        <end position="31"/>
    </location>
    <ligand>
        <name>3-dehydroquinate</name>
        <dbReference type="ChEBI" id="CHEBI:32364"/>
    </ligand>
</feature>
<feature type="binding site" evidence="1">
    <location>
        <position position="56"/>
    </location>
    <ligand>
        <name>3-dehydroquinate</name>
        <dbReference type="ChEBI" id="CHEBI:32364"/>
    </ligand>
</feature>
<feature type="binding site" evidence="1">
    <location>
        <position position="187"/>
    </location>
    <ligand>
        <name>3-dehydroquinate</name>
        <dbReference type="ChEBI" id="CHEBI:32364"/>
    </ligand>
</feature>
<feature type="binding site" evidence="1">
    <location>
        <position position="208"/>
    </location>
    <ligand>
        <name>3-dehydroquinate</name>
        <dbReference type="ChEBI" id="CHEBI:32364"/>
    </ligand>
</feature>
<feature type="binding site" evidence="1">
    <location>
        <position position="212"/>
    </location>
    <ligand>
        <name>3-dehydroquinate</name>
        <dbReference type="ChEBI" id="CHEBI:32364"/>
    </ligand>
</feature>
<sequence>MDFESFTLLAATDDLGVEPAARVDADGLELRMDFADEPLAQLDAYDGDLPILVTNRPTWEGGEAADTAGRLDALETALEHDAVTAVDLELAALEGAGDHDAGRVADAARDRGASVVVSTHNFESTPDREAIVSRLERACAHGDVGKMASTAQSPDDVLAMLGATRELTAEGEQVATMCMGAAGRHSRAVAPVYGSRIGYAPVDPADATAPGQYDLATLRTLVGQLQSDA</sequence>
<name>AROD_HALMA</name>
<keyword id="KW-0028">Amino-acid biosynthesis</keyword>
<keyword id="KW-0057">Aromatic amino acid biosynthesis</keyword>
<keyword id="KW-0456">Lyase</keyword>
<keyword id="KW-1185">Reference proteome</keyword>
<keyword id="KW-0704">Schiff base</keyword>